<name>TREM1_MOUSE</name>
<protein>
    <recommendedName>
        <fullName>Triggering receptor expressed on myeloid cells 1</fullName>
        <shortName>TREM-1</shortName>
    </recommendedName>
    <cdAntigenName>CD354</cdAntigenName>
</protein>
<sequence length="230" mass="25409">MRKAGLWGLLCVFFVSEVKAAIVLEEERYDLVEGQTLTVKCPFNIMKYANSQKAWQRLPDGKEPLTLVVTQRPFTRPSEVHMGKFTLKHDPSEAMLQVQMTDLQVTDSGLYRCVIYHPPNDPVVLFHPVRLVVTKGSSDVFTPVIIPITRLTERPILITTKYSPSDTTTTRSLPKPTAVVSSPGLGVTIINGTDADSVSTSSVTISVICGLLSKSLVFIILFIVTKRTFG</sequence>
<accession>Q9JKE2</accession>
<accession>Q3TAL7</accession>
<keyword id="KW-0002">3D-structure</keyword>
<keyword id="KW-1064">Adaptive immunity</keyword>
<keyword id="KW-1003">Cell membrane</keyword>
<keyword id="KW-1015">Disulfide bond</keyword>
<keyword id="KW-0325">Glycoprotein</keyword>
<keyword id="KW-0391">Immunity</keyword>
<keyword id="KW-0393">Immunoglobulin domain</keyword>
<keyword id="KW-0399">Innate immunity</keyword>
<keyword id="KW-0472">Membrane</keyword>
<keyword id="KW-0675">Receptor</keyword>
<keyword id="KW-1185">Reference proteome</keyword>
<keyword id="KW-0732">Signal</keyword>
<keyword id="KW-0812">Transmembrane</keyword>
<keyword id="KW-1133">Transmembrane helix</keyword>
<evidence type="ECO:0000250" key="1">
    <source>
        <dbReference type="UniProtKB" id="Q9NP99"/>
    </source>
</evidence>
<evidence type="ECO:0000255" key="2"/>
<evidence type="ECO:0000269" key="3">
    <source>
    </source>
</evidence>
<evidence type="ECO:0000269" key="4">
    <source>
    </source>
</evidence>
<evidence type="ECO:0000269" key="5">
    <source>
    </source>
</evidence>
<evidence type="ECO:0000305" key="6"/>
<evidence type="ECO:0007744" key="7">
    <source>
        <dbReference type="PDB" id="1U9K"/>
    </source>
</evidence>
<evidence type="ECO:0007829" key="8">
    <source>
        <dbReference type="PDB" id="1U9K"/>
    </source>
</evidence>
<organism>
    <name type="scientific">Mus musculus</name>
    <name type="common">Mouse</name>
    <dbReference type="NCBI Taxonomy" id="10090"/>
    <lineage>
        <taxon>Eukaryota</taxon>
        <taxon>Metazoa</taxon>
        <taxon>Chordata</taxon>
        <taxon>Craniata</taxon>
        <taxon>Vertebrata</taxon>
        <taxon>Euteleostomi</taxon>
        <taxon>Mammalia</taxon>
        <taxon>Eutheria</taxon>
        <taxon>Euarchontoglires</taxon>
        <taxon>Glires</taxon>
        <taxon>Rodentia</taxon>
        <taxon>Myomorpha</taxon>
        <taxon>Muroidea</taxon>
        <taxon>Muridae</taxon>
        <taxon>Murinae</taxon>
        <taxon>Mus</taxon>
        <taxon>Mus</taxon>
    </lineage>
</organism>
<feature type="signal peptide" evidence="2">
    <location>
        <begin position="1"/>
        <end position="20"/>
    </location>
</feature>
<feature type="chain" id="PRO_0000042797" description="Triggering receptor expressed on myeloid cells 1">
    <location>
        <begin position="21"/>
        <end position="230"/>
    </location>
</feature>
<feature type="topological domain" description="Extracellular" evidence="2">
    <location>
        <begin position="21"/>
        <end position="202"/>
    </location>
</feature>
<feature type="transmembrane region" description="Helical" evidence="2">
    <location>
        <begin position="203"/>
        <end position="223"/>
    </location>
</feature>
<feature type="topological domain" description="Cytoplasmic" evidence="2">
    <location>
        <begin position="224"/>
        <end position="230"/>
    </location>
</feature>
<feature type="domain" description="Ig-like V-type">
    <location>
        <begin position="21"/>
        <end position="124"/>
    </location>
</feature>
<feature type="glycosylation site" description="N-linked (GlcNAc...) asparagine" evidence="2">
    <location>
        <position position="191"/>
    </location>
</feature>
<feature type="disulfide bond" evidence="3 7">
    <location>
        <begin position="41"/>
        <end position="113"/>
    </location>
</feature>
<feature type="sequence conflict" description="In Ref. 2; BAE42651." evidence="6" ref="2">
    <original>S</original>
    <variation>T</variation>
    <location>
        <position position="92"/>
    </location>
</feature>
<feature type="strand" evidence="8">
    <location>
        <begin position="27"/>
        <end position="32"/>
    </location>
</feature>
<feature type="strand" evidence="8">
    <location>
        <begin position="37"/>
        <end position="42"/>
    </location>
</feature>
<feature type="helix" evidence="8">
    <location>
        <begin position="45"/>
        <end position="48"/>
    </location>
</feature>
<feature type="strand" evidence="8">
    <location>
        <begin position="51"/>
        <end position="57"/>
    </location>
</feature>
<feature type="strand" evidence="8">
    <location>
        <begin position="65"/>
        <end position="69"/>
    </location>
</feature>
<feature type="strand" evidence="8">
    <location>
        <begin position="78"/>
        <end position="82"/>
    </location>
</feature>
<feature type="strand" evidence="8">
    <location>
        <begin position="85"/>
        <end position="90"/>
    </location>
</feature>
<feature type="helix" evidence="8">
    <location>
        <begin position="91"/>
        <end position="93"/>
    </location>
</feature>
<feature type="strand" evidence="8">
    <location>
        <begin position="95"/>
        <end position="100"/>
    </location>
</feature>
<feature type="helix" evidence="8">
    <location>
        <begin position="105"/>
        <end position="107"/>
    </location>
</feature>
<feature type="strand" evidence="8">
    <location>
        <begin position="109"/>
        <end position="116"/>
    </location>
</feature>
<feature type="strand" evidence="8">
    <location>
        <begin position="129"/>
        <end position="134"/>
    </location>
</feature>
<proteinExistence type="evidence at protein level"/>
<comment type="function">
    <text evidence="1 4 5">Cell surface receptor that plays important roles in innate and adaptive immunity by amplifying inflammatory responses. Upon activation by various ligands such as PGLYRP1, HMGB1 or HSP70, multimerizes and forms a complex with transmembrane adapter TYROBP/DAP12. In turn, initiates a SYK-mediated cascade of tyrosine phosphorylation, activating multiple downstream mediators such as BTK, MAPK1, MAPK3 or phospholipase C-gamma. This cascade promotes the neutrophil- and macrophage-mediated release of pro-inflammatory cytokines and/or chemokines, as well as their migration and thereby amplifies inflammatory responses that are triggered by bacterial and fungal infections (PubMed:23241959, PubMed:27328755). By also promoting the amplification of inflammatory signals that are initially triggered by Toll-like receptor (TLR) and NOD-like receptor engagement, plays a major role in the pathophysiology of acute and chronic inflammatory diseases of different etiologies including septic shock and atherosclerosis (By similarity).</text>
</comment>
<comment type="subunit">
    <text evidence="1 3">Monomer (PubMed:15561137). Homomultimer; when activated. Interacts with TYROBP/DAP12. Interacts with TLR4 (By similarity).</text>
</comment>
<comment type="subcellular location">
    <subcellularLocation>
        <location evidence="1">Cell membrane</location>
        <topology evidence="1">Single-pass type I membrane protein</topology>
    </subcellularLocation>
    <text evidence="1">Recruited to lipid rafts when activated.</text>
</comment>
<comment type="disruption phenotype">
    <text evidence="4 5">Deletion mutants do not show any influence of the antiviral T-cell response. However, TREM1 deficiency impairs secretion of CCL2 and TNF-alpha by neutrophils in response to viruses (PubMed:27328755). TREM-1/3-deficient animals have decreased neutrophils in the airway and these neutrophils have a defect in transepithelial migration (PubMed:23241959).</text>
</comment>
<reference key="1">
    <citation type="journal article" date="2000" name="J. Immunol.">
        <title>Inflammatory responses can be triggered by TREM-1, a novel receptor expressed on neutrophils and monocytes.</title>
        <authorList>
            <person name="Bouchon A."/>
            <person name="Dietrich J."/>
            <person name="Colonna M."/>
        </authorList>
    </citation>
    <scope>NUCLEOTIDE SEQUENCE [MRNA]</scope>
</reference>
<reference key="2">
    <citation type="journal article" date="2005" name="Science">
        <title>The transcriptional landscape of the mammalian genome.</title>
        <authorList>
            <person name="Carninci P."/>
            <person name="Kasukawa T."/>
            <person name="Katayama S."/>
            <person name="Gough J."/>
            <person name="Frith M.C."/>
            <person name="Maeda N."/>
            <person name="Oyama R."/>
            <person name="Ravasi T."/>
            <person name="Lenhard B."/>
            <person name="Wells C."/>
            <person name="Kodzius R."/>
            <person name="Shimokawa K."/>
            <person name="Bajic V.B."/>
            <person name="Brenner S.E."/>
            <person name="Batalov S."/>
            <person name="Forrest A.R."/>
            <person name="Zavolan M."/>
            <person name="Davis M.J."/>
            <person name="Wilming L.G."/>
            <person name="Aidinis V."/>
            <person name="Allen J.E."/>
            <person name="Ambesi-Impiombato A."/>
            <person name="Apweiler R."/>
            <person name="Aturaliya R.N."/>
            <person name="Bailey T.L."/>
            <person name="Bansal M."/>
            <person name="Baxter L."/>
            <person name="Beisel K.W."/>
            <person name="Bersano T."/>
            <person name="Bono H."/>
            <person name="Chalk A.M."/>
            <person name="Chiu K.P."/>
            <person name="Choudhary V."/>
            <person name="Christoffels A."/>
            <person name="Clutterbuck D.R."/>
            <person name="Crowe M.L."/>
            <person name="Dalla E."/>
            <person name="Dalrymple B.P."/>
            <person name="de Bono B."/>
            <person name="Della Gatta G."/>
            <person name="di Bernardo D."/>
            <person name="Down T."/>
            <person name="Engstrom P."/>
            <person name="Fagiolini M."/>
            <person name="Faulkner G."/>
            <person name="Fletcher C.F."/>
            <person name="Fukushima T."/>
            <person name="Furuno M."/>
            <person name="Futaki S."/>
            <person name="Gariboldi M."/>
            <person name="Georgii-Hemming P."/>
            <person name="Gingeras T.R."/>
            <person name="Gojobori T."/>
            <person name="Green R.E."/>
            <person name="Gustincich S."/>
            <person name="Harbers M."/>
            <person name="Hayashi Y."/>
            <person name="Hensch T.K."/>
            <person name="Hirokawa N."/>
            <person name="Hill D."/>
            <person name="Huminiecki L."/>
            <person name="Iacono M."/>
            <person name="Ikeo K."/>
            <person name="Iwama A."/>
            <person name="Ishikawa T."/>
            <person name="Jakt M."/>
            <person name="Kanapin A."/>
            <person name="Katoh M."/>
            <person name="Kawasawa Y."/>
            <person name="Kelso J."/>
            <person name="Kitamura H."/>
            <person name="Kitano H."/>
            <person name="Kollias G."/>
            <person name="Krishnan S.P."/>
            <person name="Kruger A."/>
            <person name="Kummerfeld S.K."/>
            <person name="Kurochkin I.V."/>
            <person name="Lareau L.F."/>
            <person name="Lazarevic D."/>
            <person name="Lipovich L."/>
            <person name="Liu J."/>
            <person name="Liuni S."/>
            <person name="McWilliam S."/>
            <person name="Madan Babu M."/>
            <person name="Madera M."/>
            <person name="Marchionni L."/>
            <person name="Matsuda H."/>
            <person name="Matsuzawa S."/>
            <person name="Miki H."/>
            <person name="Mignone F."/>
            <person name="Miyake S."/>
            <person name="Morris K."/>
            <person name="Mottagui-Tabar S."/>
            <person name="Mulder N."/>
            <person name="Nakano N."/>
            <person name="Nakauchi H."/>
            <person name="Ng P."/>
            <person name="Nilsson R."/>
            <person name="Nishiguchi S."/>
            <person name="Nishikawa S."/>
            <person name="Nori F."/>
            <person name="Ohara O."/>
            <person name="Okazaki Y."/>
            <person name="Orlando V."/>
            <person name="Pang K.C."/>
            <person name="Pavan W.J."/>
            <person name="Pavesi G."/>
            <person name="Pesole G."/>
            <person name="Petrovsky N."/>
            <person name="Piazza S."/>
            <person name="Reed J."/>
            <person name="Reid J.F."/>
            <person name="Ring B.Z."/>
            <person name="Ringwald M."/>
            <person name="Rost B."/>
            <person name="Ruan Y."/>
            <person name="Salzberg S.L."/>
            <person name="Sandelin A."/>
            <person name="Schneider C."/>
            <person name="Schoenbach C."/>
            <person name="Sekiguchi K."/>
            <person name="Semple C.A."/>
            <person name="Seno S."/>
            <person name="Sessa L."/>
            <person name="Sheng Y."/>
            <person name="Shibata Y."/>
            <person name="Shimada H."/>
            <person name="Shimada K."/>
            <person name="Silva D."/>
            <person name="Sinclair B."/>
            <person name="Sperling S."/>
            <person name="Stupka E."/>
            <person name="Sugiura K."/>
            <person name="Sultana R."/>
            <person name="Takenaka Y."/>
            <person name="Taki K."/>
            <person name="Tammoja K."/>
            <person name="Tan S.L."/>
            <person name="Tang S."/>
            <person name="Taylor M.S."/>
            <person name="Tegner J."/>
            <person name="Teichmann S.A."/>
            <person name="Ueda H.R."/>
            <person name="van Nimwegen E."/>
            <person name="Verardo R."/>
            <person name="Wei C.L."/>
            <person name="Yagi K."/>
            <person name="Yamanishi H."/>
            <person name="Zabarovsky E."/>
            <person name="Zhu S."/>
            <person name="Zimmer A."/>
            <person name="Hide W."/>
            <person name="Bult C."/>
            <person name="Grimmond S.M."/>
            <person name="Teasdale R.D."/>
            <person name="Liu E.T."/>
            <person name="Brusic V."/>
            <person name="Quackenbush J."/>
            <person name="Wahlestedt C."/>
            <person name="Mattick J.S."/>
            <person name="Hume D.A."/>
            <person name="Kai C."/>
            <person name="Sasaki D."/>
            <person name="Tomaru Y."/>
            <person name="Fukuda S."/>
            <person name="Kanamori-Katayama M."/>
            <person name="Suzuki M."/>
            <person name="Aoki J."/>
            <person name="Arakawa T."/>
            <person name="Iida J."/>
            <person name="Imamura K."/>
            <person name="Itoh M."/>
            <person name="Kato T."/>
            <person name="Kawaji H."/>
            <person name="Kawagashira N."/>
            <person name="Kawashima T."/>
            <person name="Kojima M."/>
            <person name="Kondo S."/>
            <person name="Konno H."/>
            <person name="Nakano K."/>
            <person name="Ninomiya N."/>
            <person name="Nishio T."/>
            <person name="Okada M."/>
            <person name="Plessy C."/>
            <person name="Shibata K."/>
            <person name="Shiraki T."/>
            <person name="Suzuki S."/>
            <person name="Tagami M."/>
            <person name="Waki K."/>
            <person name="Watahiki A."/>
            <person name="Okamura-Oho Y."/>
            <person name="Suzuki H."/>
            <person name="Kawai J."/>
            <person name="Hayashizaki Y."/>
        </authorList>
    </citation>
    <scope>NUCLEOTIDE SEQUENCE [LARGE SCALE MRNA]</scope>
    <source>
        <strain>C57BL/6J</strain>
        <tissue>Dendritic cell</tissue>
        <tissue>Spleen</tissue>
    </source>
</reference>
<reference key="3">
    <citation type="journal article" date="2013" name="J. Clin. Invest.">
        <title>Transepithelial migration of neutrophils into the lung requires TREM-1.</title>
        <authorList>
            <person name="Klesney-Tait J."/>
            <person name="Keck K."/>
            <person name="Li X."/>
            <person name="Gilfillan S."/>
            <person name="Otero K."/>
            <person name="Baruah S."/>
            <person name="Meyerholz D.K."/>
            <person name="Varga S.M."/>
            <person name="Knudson C.J."/>
            <person name="Moninger T.O."/>
            <person name="Moreland J."/>
            <person name="Zabner J."/>
            <person name="Colonna M."/>
        </authorList>
    </citation>
    <scope>FUNCTION</scope>
    <scope>DISRUPTION PHENOTYPE</scope>
</reference>
<reference key="4">
    <citation type="journal article" date="2016" name="Sci. Rep.">
        <title>Attenuated viral hepatitis in Trem1-/- mice is associated with reduced inflammatory activity of neutrophils.</title>
        <authorList>
            <person name="Kozik J.H."/>
            <person name="Trautmann T."/>
            <person name="Carambia A."/>
            <person name="Preti M."/>
            <person name="Luetgehetmann M."/>
            <person name="Krech T."/>
            <person name="Wiegard C."/>
            <person name="Heeren J."/>
            <person name="Herkel J."/>
        </authorList>
    </citation>
    <scope>FUNCTION</scope>
    <scope>DISRUPTION PHENOTYPE</scope>
</reference>
<reference key="5">
    <citation type="journal article" date="2004" name="J. Mol. Biol.">
        <title>Crystal structure of mouse triggering receptor expressed on myeloid cells 1 (TREM-1) at 1.76 A.</title>
        <authorList>
            <person name="Kelker M.S."/>
            <person name="Debler E.W."/>
            <person name="Wilson I.A."/>
        </authorList>
    </citation>
    <scope>X-RAY CRYSTALLOGRAPHY (1.76 ANGSTROMS) OF 21-134</scope>
    <scope>SUBUNIT</scope>
    <scope>DISULFIDE BOND</scope>
</reference>
<dbReference type="EMBL" id="AF241219">
    <property type="protein sequence ID" value="AAF69834.1"/>
    <property type="molecule type" value="mRNA"/>
</dbReference>
<dbReference type="EMBL" id="AK089439">
    <property type="protein sequence ID" value="BAC40884.1"/>
    <property type="molecule type" value="mRNA"/>
</dbReference>
<dbReference type="EMBL" id="AK171753">
    <property type="protein sequence ID" value="BAE42651.1"/>
    <property type="molecule type" value="mRNA"/>
</dbReference>
<dbReference type="CCDS" id="CCDS28860.1"/>
<dbReference type="RefSeq" id="NP_067381.1">
    <property type="nucleotide sequence ID" value="NM_021406.5"/>
</dbReference>
<dbReference type="PDB" id="1U9K">
    <property type="method" value="X-ray"/>
    <property type="resolution" value="1.76 A"/>
    <property type="chains" value="A/B=21-134"/>
</dbReference>
<dbReference type="PDBsum" id="1U9K"/>
<dbReference type="SMR" id="Q9JKE2"/>
<dbReference type="BioGRID" id="208396">
    <property type="interactions" value="1"/>
</dbReference>
<dbReference type="FunCoup" id="Q9JKE2">
    <property type="interactions" value="555"/>
</dbReference>
<dbReference type="STRING" id="10090.ENSMUSP00000038636"/>
<dbReference type="GlyCosmos" id="Q9JKE2">
    <property type="glycosylation" value="1 site, No reported glycans"/>
</dbReference>
<dbReference type="GlyGen" id="Q9JKE2">
    <property type="glycosylation" value="1 site"/>
</dbReference>
<dbReference type="iPTMnet" id="Q9JKE2"/>
<dbReference type="PhosphoSitePlus" id="Q9JKE2"/>
<dbReference type="PaxDb" id="10090-ENSMUSP00000038636"/>
<dbReference type="TopDownProteomics" id="Q9JKE2"/>
<dbReference type="ABCD" id="Q9JKE2">
    <property type="antibodies" value="21 sequenced antibodies"/>
</dbReference>
<dbReference type="Antibodypedia" id="1616">
    <property type="antibodies" value="757 antibodies from 41 providers"/>
</dbReference>
<dbReference type="DNASU" id="58217"/>
<dbReference type="Ensembl" id="ENSMUST00000048782.7">
    <property type="protein sequence ID" value="ENSMUSP00000038636.7"/>
    <property type="gene ID" value="ENSMUSG00000042265.14"/>
</dbReference>
<dbReference type="GeneID" id="58217"/>
<dbReference type="KEGG" id="mmu:58217"/>
<dbReference type="UCSC" id="uc029tij.2">
    <property type="organism name" value="mouse"/>
</dbReference>
<dbReference type="AGR" id="MGI:1930005"/>
<dbReference type="CTD" id="54210"/>
<dbReference type="MGI" id="MGI:1930005">
    <property type="gene designation" value="Trem1"/>
</dbReference>
<dbReference type="VEuPathDB" id="HostDB:ENSMUSG00000042265"/>
<dbReference type="eggNOG" id="ENOG502TE0T">
    <property type="taxonomic scope" value="Eukaryota"/>
</dbReference>
<dbReference type="GeneTree" id="ENSGT00470000042299"/>
<dbReference type="HOGENOM" id="CLU_1170307_0_0_1"/>
<dbReference type="InParanoid" id="Q9JKE2"/>
<dbReference type="OMA" id="MTDIIRV"/>
<dbReference type="OrthoDB" id="8959642at2759"/>
<dbReference type="PhylomeDB" id="Q9JKE2"/>
<dbReference type="TreeFam" id="TF339293"/>
<dbReference type="Reactome" id="R-MMU-198933">
    <property type="pathway name" value="Immunoregulatory interactions between a Lymphoid and a non-Lymphoid cell"/>
</dbReference>
<dbReference type="Reactome" id="R-MMU-202733">
    <property type="pathway name" value="Cell surface interactions at the vascular wall"/>
</dbReference>
<dbReference type="Reactome" id="R-MMU-2172127">
    <property type="pathway name" value="DAP12 interactions"/>
</dbReference>
<dbReference type="BioGRID-ORCS" id="58217">
    <property type="hits" value="1 hit in 79 CRISPR screens"/>
</dbReference>
<dbReference type="EvolutionaryTrace" id="Q9JKE2"/>
<dbReference type="PRO" id="PR:Q9JKE2"/>
<dbReference type="Proteomes" id="UP000000589">
    <property type="component" value="Chromosome 17"/>
</dbReference>
<dbReference type="RNAct" id="Q9JKE2">
    <property type="molecule type" value="protein"/>
</dbReference>
<dbReference type="Bgee" id="ENSMUSG00000042265">
    <property type="expression patterns" value="Expressed in granulocyte and 21 other cell types or tissues"/>
</dbReference>
<dbReference type="ExpressionAtlas" id="Q9JKE2">
    <property type="expression patterns" value="baseline and differential"/>
</dbReference>
<dbReference type="GO" id="GO:0005886">
    <property type="term" value="C:plasma membrane"/>
    <property type="evidence" value="ECO:0007669"/>
    <property type="project" value="UniProtKB-SubCell"/>
</dbReference>
<dbReference type="GO" id="GO:0002250">
    <property type="term" value="P:adaptive immune response"/>
    <property type="evidence" value="ECO:0007669"/>
    <property type="project" value="UniProtKB-KW"/>
</dbReference>
<dbReference type="GO" id="GO:0045087">
    <property type="term" value="P:innate immune response"/>
    <property type="evidence" value="ECO:0007669"/>
    <property type="project" value="UniProtKB-KW"/>
</dbReference>
<dbReference type="GO" id="GO:0030593">
    <property type="term" value="P:neutrophil chemotaxis"/>
    <property type="evidence" value="ECO:0000316"/>
    <property type="project" value="MGI"/>
</dbReference>
<dbReference type="GO" id="GO:0072672">
    <property type="term" value="P:neutrophil extravasation"/>
    <property type="evidence" value="ECO:0000316"/>
    <property type="project" value="MGI"/>
</dbReference>
<dbReference type="GO" id="GO:1990266">
    <property type="term" value="P:neutrophil migration"/>
    <property type="evidence" value="ECO:0000316"/>
    <property type="project" value="MGI"/>
</dbReference>
<dbReference type="GO" id="GO:0070945">
    <property type="term" value="P:neutrophil-mediated killing of gram-negative bacterium"/>
    <property type="evidence" value="ECO:0000316"/>
    <property type="project" value="MGI"/>
</dbReference>
<dbReference type="Gene3D" id="2.60.40.10">
    <property type="entry name" value="Immunoglobulins"/>
    <property type="match status" value="1"/>
</dbReference>
<dbReference type="InterPro" id="IPR007110">
    <property type="entry name" value="Ig-like_dom"/>
</dbReference>
<dbReference type="InterPro" id="IPR036179">
    <property type="entry name" value="Ig-like_dom_sf"/>
</dbReference>
<dbReference type="InterPro" id="IPR013783">
    <property type="entry name" value="Ig-like_fold"/>
</dbReference>
<dbReference type="InterPro" id="IPR003599">
    <property type="entry name" value="Ig_sub"/>
</dbReference>
<dbReference type="InterPro" id="IPR013106">
    <property type="entry name" value="Ig_V-set"/>
</dbReference>
<dbReference type="PANTHER" id="PTHR19357">
    <property type="entry name" value="TRIGGERING RECEPTOR EXPRESSED ON MYELOID CELLS 1"/>
    <property type="match status" value="1"/>
</dbReference>
<dbReference type="PANTHER" id="PTHR19357:SF0">
    <property type="entry name" value="TRIGGERING RECEPTOR EXPRESSED ON MYELOID CELLS 1"/>
    <property type="match status" value="1"/>
</dbReference>
<dbReference type="Pfam" id="PF07686">
    <property type="entry name" value="V-set"/>
    <property type="match status" value="1"/>
</dbReference>
<dbReference type="SMART" id="SM00409">
    <property type="entry name" value="IG"/>
    <property type="match status" value="1"/>
</dbReference>
<dbReference type="SUPFAM" id="SSF48726">
    <property type="entry name" value="Immunoglobulin"/>
    <property type="match status" value="1"/>
</dbReference>
<dbReference type="PROSITE" id="PS50835">
    <property type="entry name" value="IG_LIKE"/>
    <property type="match status" value="1"/>
</dbReference>
<gene>
    <name type="primary">Trem1</name>
</gene>